<dbReference type="EMBL" id="CP000026">
    <property type="protein sequence ID" value="AAV78591.1"/>
    <property type="molecule type" value="Genomic_DNA"/>
</dbReference>
<dbReference type="RefSeq" id="WP_001120088.1">
    <property type="nucleotide sequence ID" value="NC_006511.1"/>
</dbReference>
<dbReference type="SMR" id="Q5PEB1"/>
<dbReference type="KEGG" id="spt:SPA2734"/>
<dbReference type="HOGENOM" id="CLU_034088_0_0_6"/>
<dbReference type="Proteomes" id="UP000008185">
    <property type="component" value="Chromosome"/>
</dbReference>
<dbReference type="GO" id="GO:0003677">
    <property type="term" value="F:DNA binding"/>
    <property type="evidence" value="ECO:0007669"/>
    <property type="project" value="UniProtKB-KW"/>
</dbReference>
<dbReference type="GO" id="GO:0000160">
    <property type="term" value="P:phosphorelay signal transduction system"/>
    <property type="evidence" value="ECO:0007669"/>
    <property type="project" value="UniProtKB-KW"/>
</dbReference>
<dbReference type="GO" id="GO:0006355">
    <property type="term" value="P:regulation of DNA-templated transcription"/>
    <property type="evidence" value="ECO:0007669"/>
    <property type="project" value="InterPro"/>
</dbReference>
<dbReference type="CDD" id="cd00383">
    <property type="entry name" value="trans_reg_C"/>
    <property type="match status" value="1"/>
</dbReference>
<dbReference type="Gene3D" id="1.25.40.10">
    <property type="entry name" value="Tetratricopeptide repeat domain"/>
    <property type="match status" value="1"/>
</dbReference>
<dbReference type="Gene3D" id="1.10.10.10">
    <property type="entry name" value="Winged helix-like DNA-binding domain superfamily/Winged helix DNA-binding domain"/>
    <property type="match status" value="1"/>
</dbReference>
<dbReference type="InterPro" id="IPR001867">
    <property type="entry name" value="OmpR/PhoB-type_DNA-bd"/>
</dbReference>
<dbReference type="InterPro" id="IPR016032">
    <property type="entry name" value="Sig_transdc_resp-reg_C-effctor"/>
</dbReference>
<dbReference type="InterPro" id="IPR011990">
    <property type="entry name" value="TPR-like_helical_dom_sf"/>
</dbReference>
<dbReference type="InterPro" id="IPR019734">
    <property type="entry name" value="TPR_rpt"/>
</dbReference>
<dbReference type="InterPro" id="IPR036388">
    <property type="entry name" value="WH-like_DNA-bd_sf"/>
</dbReference>
<dbReference type="NCBIfam" id="NF009037">
    <property type="entry name" value="PRK12370.1"/>
    <property type="match status" value="1"/>
</dbReference>
<dbReference type="Pfam" id="PF00486">
    <property type="entry name" value="Trans_reg_C"/>
    <property type="match status" value="1"/>
</dbReference>
<dbReference type="SMART" id="SM00862">
    <property type="entry name" value="Trans_reg_C"/>
    <property type="match status" value="1"/>
</dbReference>
<dbReference type="SUPFAM" id="SSF46894">
    <property type="entry name" value="C-terminal effector domain of the bipartite response regulators"/>
    <property type="match status" value="1"/>
</dbReference>
<dbReference type="SUPFAM" id="SSF48452">
    <property type="entry name" value="TPR-like"/>
    <property type="match status" value="1"/>
</dbReference>
<dbReference type="PROSITE" id="PS51755">
    <property type="entry name" value="OMPR_PHOB"/>
    <property type="match status" value="1"/>
</dbReference>
<dbReference type="PROSITE" id="PS50005">
    <property type="entry name" value="TPR"/>
    <property type="match status" value="1"/>
</dbReference>
<dbReference type="PROSITE" id="PS50293">
    <property type="entry name" value="TPR_REGION"/>
    <property type="match status" value="1"/>
</dbReference>
<keyword id="KW-0010">Activator</keyword>
<keyword id="KW-0238">DNA-binding</keyword>
<keyword id="KW-0597">Phosphoprotein</keyword>
<keyword id="KW-0802">TPR repeat</keyword>
<keyword id="KW-0804">Transcription</keyword>
<keyword id="KW-0805">Transcription regulation</keyword>
<keyword id="KW-0902">Two-component regulatory system</keyword>
<keyword id="KW-0843">Virulence</keyword>
<accession>Q5PEB1</accession>
<comment type="function">
    <text evidence="1">The main transcriptional regulator of the Salmonella pathogenicity island 1 (SPI1) gene expression. Activates the expression of invasion genes by a direct action at their promoters and also indirectly by increasing the level of invF. Also binds upstream of prgH and directly activates the expression of prgHIJK operon (By similarity).</text>
</comment>
<comment type="induction">
    <text evidence="1">Expressed in response to both environmental conditions and genetic regulatory factors. Transcription is subject to complex control and is stimulated by the SPI1-encoded HilC and HilD (By similarity).</text>
</comment>
<gene>
    <name type="primary">hilA</name>
    <name type="synonym">iagA</name>
    <name type="ordered locus">SPA2734</name>
</gene>
<proteinExistence type="inferred from homology"/>
<sequence length="553" mass="63071">MPHFNPVPVSNKKFVFDDFILNMDGSLLRSEKKVNIPPKEYAVLVILLEAAGEIVSKNTLLDQVWGDAEVNEESLTRCIYALRRILSEDKEHRYIETLYGQGYRFNRPVVVVSPPAPQPTTHTLAILPFQMQDQVQSESLHYSIVKGLSQYAPFGLSVLPVTITKNCRSVKDILELMDQLRPDYYISGQMIPDGNDNIVQIEIVRVKGYHLLHQESIKLIEHQPASLLQNKIANLLLRCIPGLRWDTKQISELNSIDSTMVYLRGKHELNQYTPYSLQQALKLLTQCVNMSPNSIAPYCALAECYLSMTQMGIFDKQNAMIKAKEHAIKATELDHNNPQALGLLGLINTIHSEYIVGSLLFKQANLLSPISADIKYYYGWNLFMAGQLEEALQTINECLKLDPTRAAAGITKLWITYYHTGIDDAIRLGDELRSQHLQDNPILLSMQVMFLSLKGKHELARKLTKEISTQEITGLIAVNLLYAEYCQNSERALPTIREFLESEQRIDNNPGLLPLVLVAHGEAIAEKMWNKFKNEDNIWFKRWKQDPRLIKLR</sequence>
<organism>
    <name type="scientific">Salmonella paratyphi A (strain ATCC 9150 / SARB42)</name>
    <dbReference type="NCBI Taxonomy" id="295319"/>
    <lineage>
        <taxon>Bacteria</taxon>
        <taxon>Pseudomonadati</taxon>
        <taxon>Pseudomonadota</taxon>
        <taxon>Gammaproteobacteria</taxon>
        <taxon>Enterobacterales</taxon>
        <taxon>Enterobacteriaceae</taxon>
        <taxon>Salmonella</taxon>
    </lineage>
</organism>
<feature type="chain" id="PRO_0000081106" description="Transcriptional regulator HilA">
    <location>
        <begin position="1"/>
        <end position="553"/>
    </location>
</feature>
<feature type="repeat" description="TPR">
    <location>
        <begin position="372"/>
        <end position="405"/>
    </location>
</feature>
<feature type="DNA-binding region" description="OmpR/PhoB-type" evidence="2">
    <location>
        <begin position="11"/>
        <end position="107"/>
    </location>
</feature>
<feature type="modified residue" description="4-aspartylphosphate" evidence="1">
    <location>
        <position position="62"/>
    </location>
</feature>
<protein>
    <recommendedName>
        <fullName>Transcriptional regulator HilA</fullName>
        <shortName>Protein IagA</shortName>
    </recommendedName>
</protein>
<name>HILA_SALPA</name>
<reference key="1">
    <citation type="journal article" date="2004" name="Nat. Genet.">
        <title>Comparison of genome degradation in Paratyphi A and Typhi, human-restricted serovars of Salmonella enterica that cause typhoid.</title>
        <authorList>
            <person name="McClelland M."/>
            <person name="Sanderson K.E."/>
            <person name="Clifton S.W."/>
            <person name="Latreille P."/>
            <person name="Porwollik S."/>
            <person name="Sabo A."/>
            <person name="Meyer R."/>
            <person name="Bieri T."/>
            <person name="Ozersky P."/>
            <person name="McLellan M."/>
            <person name="Harkins C.R."/>
            <person name="Wang C."/>
            <person name="Nguyen C."/>
            <person name="Berghoff A."/>
            <person name="Elliott G."/>
            <person name="Kohlberg S."/>
            <person name="Strong C."/>
            <person name="Du F."/>
            <person name="Carter J."/>
            <person name="Kremizki C."/>
            <person name="Layman D."/>
            <person name="Leonard S."/>
            <person name="Sun H."/>
            <person name="Fulton L."/>
            <person name="Nash W."/>
            <person name="Miner T."/>
            <person name="Minx P."/>
            <person name="Delehaunty K."/>
            <person name="Fronick C."/>
            <person name="Magrini V."/>
            <person name="Nhan M."/>
            <person name="Warren W."/>
            <person name="Florea L."/>
            <person name="Spieth J."/>
            <person name="Wilson R.K."/>
        </authorList>
    </citation>
    <scope>NUCLEOTIDE SEQUENCE [LARGE SCALE GENOMIC DNA]</scope>
    <source>
        <strain>ATCC 9150 / SARB42</strain>
    </source>
</reference>
<evidence type="ECO:0000250" key="1"/>
<evidence type="ECO:0000255" key="2">
    <source>
        <dbReference type="PROSITE-ProRule" id="PRU01091"/>
    </source>
</evidence>